<comment type="function">
    <text evidence="1">Produces ATP from ADP in the presence of a proton gradient across the membrane. The alpha chain is a regulatory subunit.</text>
</comment>
<comment type="catalytic activity">
    <reaction evidence="1">
        <text>ATP + H2O + 4 H(+)(in) = ADP + phosphate + 5 H(+)(out)</text>
        <dbReference type="Rhea" id="RHEA:57720"/>
        <dbReference type="ChEBI" id="CHEBI:15377"/>
        <dbReference type="ChEBI" id="CHEBI:15378"/>
        <dbReference type="ChEBI" id="CHEBI:30616"/>
        <dbReference type="ChEBI" id="CHEBI:43474"/>
        <dbReference type="ChEBI" id="CHEBI:456216"/>
        <dbReference type="EC" id="7.1.2.2"/>
    </reaction>
</comment>
<comment type="subunit">
    <text evidence="1">F-type ATPases have 2 components, CF(1) - the catalytic core - and CF(0) - the membrane proton channel. CF(1) has five subunits: alpha(3), beta(3), gamma(1), delta(1), epsilon(1). CF(0) has three main subunits: a(1), b(2) and c(9-12). The alpha and beta chains form an alternating ring which encloses part of the gamma chain. CF(1) is attached to CF(0) by a central stalk formed by the gamma and epsilon chains, while a peripheral stalk is formed by the delta and b chains.</text>
</comment>
<comment type="subcellular location">
    <subcellularLocation>
        <location evidence="1">Cell inner membrane</location>
        <topology evidence="1">Peripheral membrane protein</topology>
    </subcellularLocation>
</comment>
<comment type="similarity">
    <text evidence="1">Belongs to the ATPase alpha/beta chains family.</text>
</comment>
<name>ATPA_BACFR</name>
<evidence type="ECO:0000255" key="1">
    <source>
        <dbReference type="HAMAP-Rule" id="MF_01346"/>
    </source>
</evidence>
<accession>Q64UA4</accession>
<proteinExistence type="inferred from homology"/>
<keyword id="KW-0066">ATP synthesis</keyword>
<keyword id="KW-0067">ATP-binding</keyword>
<keyword id="KW-0997">Cell inner membrane</keyword>
<keyword id="KW-1003">Cell membrane</keyword>
<keyword id="KW-0139">CF(1)</keyword>
<keyword id="KW-0375">Hydrogen ion transport</keyword>
<keyword id="KW-0406">Ion transport</keyword>
<keyword id="KW-0472">Membrane</keyword>
<keyword id="KW-0547">Nucleotide-binding</keyword>
<keyword id="KW-1278">Translocase</keyword>
<keyword id="KW-0813">Transport</keyword>
<protein>
    <recommendedName>
        <fullName evidence="1">ATP synthase subunit alpha</fullName>
        <ecNumber evidence="1">7.1.2.2</ecNumber>
    </recommendedName>
    <alternativeName>
        <fullName evidence="1">ATP synthase F1 sector subunit alpha</fullName>
    </alternativeName>
    <alternativeName>
        <fullName evidence="1">F-ATPase subunit alpha</fullName>
    </alternativeName>
</protein>
<reference key="1">
    <citation type="journal article" date="2004" name="Proc. Natl. Acad. Sci. U.S.A.">
        <title>Genomic analysis of Bacteroides fragilis reveals extensive DNA inversions regulating cell surface adaptation.</title>
        <authorList>
            <person name="Kuwahara T."/>
            <person name="Yamashita A."/>
            <person name="Hirakawa H."/>
            <person name="Nakayama H."/>
            <person name="Toh H."/>
            <person name="Okada N."/>
            <person name="Kuhara S."/>
            <person name="Hattori M."/>
            <person name="Hayashi T."/>
            <person name="Ohnishi Y."/>
        </authorList>
    </citation>
    <scope>NUCLEOTIDE SEQUENCE [LARGE SCALE GENOMIC DNA]</scope>
    <source>
        <strain>YCH46</strain>
    </source>
</reference>
<feature type="chain" id="PRO_0000238199" description="ATP synthase subunit alpha">
    <location>
        <begin position="1"/>
        <end position="527"/>
    </location>
</feature>
<feature type="binding site" evidence="1">
    <location>
        <begin position="172"/>
        <end position="179"/>
    </location>
    <ligand>
        <name>ATP</name>
        <dbReference type="ChEBI" id="CHEBI:30616"/>
    </ligand>
</feature>
<feature type="site" description="Required for activity" evidence="1">
    <location>
        <position position="388"/>
    </location>
</feature>
<dbReference type="EC" id="7.1.2.2" evidence="1"/>
<dbReference type="EMBL" id="AP006841">
    <property type="protein sequence ID" value="BAD48925.1"/>
    <property type="molecule type" value="Genomic_DNA"/>
</dbReference>
<dbReference type="RefSeq" id="WP_005787491.1">
    <property type="nucleotide sequence ID" value="NZ_UYXF01000015.1"/>
</dbReference>
<dbReference type="RefSeq" id="YP_099459.1">
    <property type="nucleotide sequence ID" value="NC_006347.1"/>
</dbReference>
<dbReference type="SMR" id="Q64UA4"/>
<dbReference type="STRING" id="295405.BF2178"/>
<dbReference type="GeneID" id="60366310"/>
<dbReference type="KEGG" id="bfr:BF2178"/>
<dbReference type="PATRIC" id="fig|295405.11.peg.2115"/>
<dbReference type="HOGENOM" id="CLU_010091_2_1_10"/>
<dbReference type="OrthoDB" id="9803053at2"/>
<dbReference type="Proteomes" id="UP000002197">
    <property type="component" value="Chromosome"/>
</dbReference>
<dbReference type="GO" id="GO:0005886">
    <property type="term" value="C:plasma membrane"/>
    <property type="evidence" value="ECO:0007669"/>
    <property type="project" value="UniProtKB-SubCell"/>
</dbReference>
<dbReference type="GO" id="GO:0045259">
    <property type="term" value="C:proton-transporting ATP synthase complex"/>
    <property type="evidence" value="ECO:0007669"/>
    <property type="project" value="UniProtKB-KW"/>
</dbReference>
<dbReference type="GO" id="GO:0043531">
    <property type="term" value="F:ADP binding"/>
    <property type="evidence" value="ECO:0007669"/>
    <property type="project" value="TreeGrafter"/>
</dbReference>
<dbReference type="GO" id="GO:0005524">
    <property type="term" value="F:ATP binding"/>
    <property type="evidence" value="ECO:0007669"/>
    <property type="project" value="UniProtKB-UniRule"/>
</dbReference>
<dbReference type="GO" id="GO:0046933">
    <property type="term" value="F:proton-transporting ATP synthase activity, rotational mechanism"/>
    <property type="evidence" value="ECO:0007669"/>
    <property type="project" value="UniProtKB-UniRule"/>
</dbReference>
<dbReference type="CDD" id="cd18113">
    <property type="entry name" value="ATP-synt_F1_alpha_C"/>
    <property type="match status" value="1"/>
</dbReference>
<dbReference type="CDD" id="cd18116">
    <property type="entry name" value="ATP-synt_F1_alpha_N"/>
    <property type="match status" value="1"/>
</dbReference>
<dbReference type="CDD" id="cd01132">
    <property type="entry name" value="F1-ATPase_alpha_CD"/>
    <property type="match status" value="1"/>
</dbReference>
<dbReference type="FunFam" id="1.20.150.20:FF:000001">
    <property type="entry name" value="ATP synthase subunit alpha"/>
    <property type="match status" value="1"/>
</dbReference>
<dbReference type="FunFam" id="2.40.30.20:FF:000001">
    <property type="entry name" value="ATP synthase subunit alpha"/>
    <property type="match status" value="1"/>
</dbReference>
<dbReference type="FunFam" id="3.40.50.300:FF:000002">
    <property type="entry name" value="ATP synthase subunit alpha"/>
    <property type="match status" value="1"/>
</dbReference>
<dbReference type="Gene3D" id="2.40.30.20">
    <property type="match status" value="1"/>
</dbReference>
<dbReference type="Gene3D" id="1.20.150.20">
    <property type="entry name" value="ATP synthase alpha/beta chain, C-terminal domain"/>
    <property type="match status" value="1"/>
</dbReference>
<dbReference type="Gene3D" id="3.40.50.300">
    <property type="entry name" value="P-loop containing nucleotide triphosphate hydrolases"/>
    <property type="match status" value="1"/>
</dbReference>
<dbReference type="HAMAP" id="MF_01346">
    <property type="entry name" value="ATP_synth_alpha_bact"/>
    <property type="match status" value="1"/>
</dbReference>
<dbReference type="InterPro" id="IPR023366">
    <property type="entry name" value="ATP_synth_asu-like_sf"/>
</dbReference>
<dbReference type="InterPro" id="IPR000793">
    <property type="entry name" value="ATP_synth_asu_C"/>
</dbReference>
<dbReference type="InterPro" id="IPR038376">
    <property type="entry name" value="ATP_synth_asu_C_sf"/>
</dbReference>
<dbReference type="InterPro" id="IPR033732">
    <property type="entry name" value="ATP_synth_F1_a_nt-bd_dom"/>
</dbReference>
<dbReference type="InterPro" id="IPR005294">
    <property type="entry name" value="ATP_synth_F1_asu"/>
</dbReference>
<dbReference type="InterPro" id="IPR020003">
    <property type="entry name" value="ATPase_a/bsu_AS"/>
</dbReference>
<dbReference type="InterPro" id="IPR004100">
    <property type="entry name" value="ATPase_F1/V1/A1_a/bsu_N"/>
</dbReference>
<dbReference type="InterPro" id="IPR036121">
    <property type="entry name" value="ATPase_F1/V1/A1_a/bsu_N_sf"/>
</dbReference>
<dbReference type="InterPro" id="IPR000194">
    <property type="entry name" value="ATPase_F1/V1/A1_a/bsu_nucl-bd"/>
</dbReference>
<dbReference type="InterPro" id="IPR027417">
    <property type="entry name" value="P-loop_NTPase"/>
</dbReference>
<dbReference type="NCBIfam" id="TIGR00962">
    <property type="entry name" value="atpA"/>
    <property type="match status" value="1"/>
</dbReference>
<dbReference type="NCBIfam" id="NF009884">
    <property type="entry name" value="PRK13343.1"/>
    <property type="match status" value="1"/>
</dbReference>
<dbReference type="PANTHER" id="PTHR48082">
    <property type="entry name" value="ATP SYNTHASE SUBUNIT ALPHA, MITOCHONDRIAL"/>
    <property type="match status" value="1"/>
</dbReference>
<dbReference type="PANTHER" id="PTHR48082:SF2">
    <property type="entry name" value="ATP SYNTHASE SUBUNIT ALPHA, MITOCHONDRIAL"/>
    <property type="match status" value="1"/>
</dbReference>
<dbReference type="Pfam" id="PF00006">
    <property type="entry name" value="ATP-synt_ab"/>
    <property type="match status" value="1"/>
</dbReference>
<dbReference type="Pfam" id="PF00306">
    <property type="entry name" value="ATP-synt_ab_C"/>
    <property type="match status" value="1"/>
</dbReference>
<dbReference type="Pfam" id="PF02874">
    <property type="entry name" value="ATP-synt_ab_N"/>
    <property type="match status" value="1"/>
</dbReference>
<dbReference type="SUPFAM" id="SSF47917">
    <property type="entry name" value="C-terminal domain of alpha and beta subunits of F1 ATP synthase"/>
    <property type="match status" value="1"/>
</dbReference>
<dbReference type="SUPFAM" id="SSF50615">
    <property type="entry name" value="N-terminal domain of alpha and beta subunits of F1 ATP synthase"/>
    <property type="match status" value="1"/>
</dbReference>
<dbReference type="SUPFAM" id="SSF52540">
    <property type="entry name" value="P-loop containing nucleoside triphosphate hydrolases"/>
    <property type="match status" value="1"/>
</dbReference>
<dbReference type="PROSITE" id="PS00152">
    <property type="entry name" value="ATPASE_ALPHA_BETA"/>
    <property type="match status" value="1"/>
</dbReference>
<organism>
    <name type="scientific">Bacteroides fragilis (strain YCH46)</name>
    <dbReference type="NCBI Taxonomy" id="295405"/>
    <lineage>
        <taxon>Bacteria</taxon>
        <taxon>Pseudomonadati</taxon>
        <taxon>Bacteroidota</taxon>
        <taxon>Bacteroidia</taxon>
        <taxon>Bacteroidales</taxon>
        <taxon>Bacteroidaceae</taxon>
        <taxon>Bacteroides</taxon>
    </lineage>
</organism>
<sequence length="527" mass="57408">MSENIRVSEVSDILRQQLEGIETKVQLDEIGTVLQVSDGVVRIYGLRNAEANELLEFDNGIKAIVMNLEEDNVGAVLLGPTDKIKEGFTVKRTKRIASIRVGESMLGRVIDPLGEPLDGKGLIGGELYEMPLERKAPGVIYRQPVNQPLQTGLKAVDAMIPIGRGQRELIIGDRQTGKTSIAIDTIINQRSNYEAGDPVYCIYVAIGQKGSTVASIVNTLRQYGAMDYTIVVAATAGDPAALQYFAPFAGAAIGEYFRDTGRHALVVYDDLSKQAVSYREVSLILRRPSGREAYPGDIFYLHSRLLERAAKIINQEEVAREMNDLPESLKGKVKGGGSLTALPIIETQAGDVSAYIPTNVISITDGQIFLDTDLFNQGNRPAINVGISVSRVGGNAQIKAMKKVAGTLKIDQAQYRELEAFSKFSGDMDPVTALTIDKGQKNARLLVQPQYSPMPVEKQIAILYCGIHGLLRNVPLDKVEDFEAAFLNTLALDHQADVLDVLKTGVINDEVTKAIEETAAMVAKQYS</sequence>
<gene>
    <name evidence="1" type="primary">atpA</name>
    <name type="ordered locus">BF2178</name>
</gene>